<evidence type="ECO:0000250" key="1">
    <source>
        <dbReference type="UniProtKB" id="Q6UW10"/>
    </source>
</evidence>
<evidence type="ECO:0000255" key="2"/>
<evidence type="ECO:0000269" key="3">
    <source>
    </source>
</evidence>
<evidence type="ECO:0000305" key="4"/>
<evidence type="ECO:0000312" key="5">
    <source>
        <dbReference type="MGI" id="MGI:3643293"/>
    </source>
</evidence>
<evidence type="ECO:0000312" key="6">
    <source>
        <dbReference type="Proteomes" id="UP000000589"/>
    </source>
</evidence>
<gene>
    <name evidence="5" type="primary">Sfta2</name>
</gene>
<comment type="function">
    <text evidence="4">Putative surfactant protein.</text>
</comment>
<comment type="subcellular location">
    <subcellularLocation>
        <location evidence="4">Secreted</location>
    </subcellularLocation>
    <subcellularLocation>
        <location evidence="1">Cytoplasmic vesicle</location>
        <location evidence="1">Secretory vesicle</location>
    </subcellularLocation>
    <subcellularLocation>
        <location evidence="1">Golgi apparatus</location>
    </subcellularLocation>
</comment>
<comment type="tissue specificity">
    <text evidence="3">Expressed in lung, and specifically in alveolar type II epithelial cells.</text>
</comment>
<comment type="induction">
    <text evidence="3">Down-regulated in response to LPS (lipopolysaccharide) challenge.</text>
</comment>
<comment type="PTM">
    <text evidence="1">N-glycosylated.</text>
</comment>
<name>SFTA2_MOUSE</name>
<accession>E9PXB6</accession>
<reference evidence="6" key="1">
    <citation type="journal article" date="2009" name="PLoS Biol.">
        <title>Lineage-specific biology revealed by a finished genome assembly of the mouse.</title>
        <authorList>
            <person name="Church D.M."/>
            <person name="Goodstadt L."/>
            <person name="Hillier L.W."/>
            <person name="Zody M.C."/>
            <person name="Goldstein S."/>
            <person name="She X."/>
            <person name="Bult C.J."/>
            <person name="Agarwala R."/>
            <person name="Cherry J.L."/>
            <person name="DiCuccio M."/>
            <person name="Hlavina W."/>
            <person name="Kapustin Y."/>
            <person name="Meric P."/>
            <person name="Maglott D."/>
            <person name="Birtle Z."/>
            <person name="Marques A.C."/>
            <person name="Graves T."/>
            <person name="Zhou S."/>
            <person name="Teague B."/>
            <person name="Potamousis K."/>
            <person name="Churas C."/>
            <person name="Place M."/>
            <person name="Herschleb J."/>
            <person name="Runnheim R."/>
            <person name="Forrest D."/>
            <person name="Amos-Landgraf J."/>
            <person name="Schwartz D.C."/>
            <person name="Cheng Z."/>
            <person name="Lindblad-Toh K."/>
            <person name="Eichler E.E."/>
            <person name="Ponting C.P."/>
        </authorList>
    </citation>
    <scope>NUCLEOTIDE SEQUENCE [LARGE SCALE GENOMIC DNA]</scope>
    <source>
        <strain evidence="6">C57BL/6J</strain>
    </source>
</reference>
<reference evidence="4" key="2">
    <citation type="journal article" date="2012" name="PLoS ONE">
        <title>SFTA2--a novel secretory peptide highly expressed in the lung--is modulated by lipopolysaccharide but not hyperoxia.</title>
        <authorList>
            <person name="Mittal R.A."/>
            <person name="Hammel M."/>
            <person name="Schwarz J."/>
            <person name="Heschl K.M."/>
            <person name="Bretschneider N."/>
            <person name="Flemmer A.W."/>
            <person name="Herber-Jonat S."/>
            <person name="Koenigshoff M."/>
            <person name="Eickelberg O."/>
            <person name="Holzinger A."/>
        </authorList>
    </citation>
    <scope>TISSUE SPECIFICITY</scope>
    <scope>INDUCTION BY LPS</scope>
</reference>
<proteinExistence type="evidence at transcript level"/>
<keyword id="KW-0968">Cytoplasmic vesicle</keyword>
<keyword id="KW-0325">Glycoprotein</keyword>
<keyword id="KW-0333">Golgi apparatus</keyword>
<keyword id="KW-1185">Reference proteome</keyword>
<keyword id="KW-0964">Secreted</keyword>
<keyword id="KW-0732">Signal</keyword>
<organism evidence="6">
    <name type="scientific">Mus musculus</name>
    <name type="common">Mouse</name>
    <dbReference type="NCBI Taxonomy" id="10090"/>
    <lineage>
        <taxon>Eukaryota</taxon>
        <taxon>Metazoa</taxon>
        <taxon>Chordata</taxon>
        <taxon>Craniata</taxon>
        <taxon>Vertebrata</taxon>
        <taxon>Euteleostomi</taxon>
        <taxon>Mammalia</taxon>
        <taxon>Eutheria</taxon>
        <taxon>Euarchontoglires</taxon>
        <taxon>Glires</taxon>
        <taxon>Rodentia</taxon>
        <taxon>Myomorpha</taxon>
        <taxon>Muroidea</taxon>
        <taxon>Muridae</taxon>
        <taxon>Murinae</taxon>
        <taxon>Mus</taxon>
        <taxon>Mus</taxon>
    </lineage>
</organism>
<dbReference type="EMBL" id="CR974473">
    <property type="status" value="NOT_ANNOTATED_CDS"/>
    <property type="molecule type" value="Genomic_DNA"/>
</dbReference>
<dbReference type="CCDS" id="CCDS50093.1"/>
<dbReference type="RefSeq" id="NP_001156666.1">
    <property type="nucleotide sequence ID" value="NM_001163194.1"/>
</dbReference>
<dbReference type="SMR" id="E9PXB6"/>
<dbReference type="STRING" id="10090.ENSMUSP00000132839"/>
<dbReference type="GlyCosmos" id="E9PXB6">
    <property type="glycosylation" value="1 site, No reported glycans"/>
</dbReference>
<dbReference type="GlyGen" id="E9PXB6">
    <property type="glycosylation" value="1 site"/>
</dbReference>
<dbReference type="PhosphoSitePlus" id="E9PXB6"/>
<dbReference type="PaxDb" id="10090-ENSMUSP00000132839"/>
<dbReference type="Ensembl" id="ENSMUST00000171166.3">
    <property type="protein sequence ID" value="ENSMUSP00000132839.3"/>
    <property type="gene ID" value="ENSMUSG00000090509.3"/>
</dbReference>
<dbReference type="GeneID" id="433102"/>
<dbReference type="KEGG" id="mmu:433102"/>
<dbReference type="UCSC" id="uc008cid.1">
    <property type="organism name" value="mouse"/>
</dbReference>
<dbReference type="AGR" id="MGI:3643293"/>
<dbReference type="CTD" id="389376"/>
<dbReference type="MGI" id="MGI:3643293">
    <property type="gene designation" value="Sfta2"/>
</dbReference>
<dbReference type="VEuPathDB" id="HostDB:ENSMUSG00000090509"/>
<dbReference type="eggNOG" id="ENOG502TGNM">
    <property type="taxonomic scope" value="Eukaryota"/>
</dbReference>
<dbReference type="HOGENOM" id="CLU_173432_0_0_1"/>
<dbReference type="InParanoid" id="E9PXB6"/>
<dbReference type="OMA" id="GPRMILQ"/>
<dbReference type="OrthoDB" id="67340at9989"/>
<dbReference type="BioGRID-ORCS" id="433102">
    <property type="hits" value="0 hits in 73 CRISPR screens"/>
</dbReference>
<dbReference type="ChiTaRS" id="Sfta2">
    <property type="organism name" value="mouse"/>
</dbReference>
<dbReference type="PRO" id="PR:E9PXB6"/>
<dbReference type="Proteomes" id="UP000000589">
    <property type="component" value="Chromosome 17"/>
</dbReference>
<dbReference type="RNAct" id="E9PXB6">
    <property type="molecule type" value="protein"/>
</dbReference>
<dbReference type="Bgee" id="ENSMUSG00000090509">
    <property type="expression patterns" value="Expressed in lung and 20 other cell types or tissues"/>
</dbReference>
<dbReference type="ExpressionAtlas" id="E9PXB6">
    <property type="expression patterns" value="baseline and differential"/>
</dbReference>
<dbReference type="GO" id="GO:0005576">
    <property type="term" value="C:extracellular region"/>
    <property type="evidence" value="ECO:0007669"/>
    <property type="project" value="UniProtKB-SubCell"/>
</dbReference>
<dbReference type="GO" id="GO:0005794">
    <property type="term" value="C:Golgi apparatus"/>
    <property type="evidence" value="ECO:0007669"/>
    <property type="project" value="UniProtKB-SubCell"/>
</dbReference>
<dbReference type="GO" id="GO:0030133">
    <property type="term" value="C:transport vesicle"/>
    <property type="evidence" value="ECO:0007669"/>
    <property type="project" value="UniProtKB-SubCell"/>
</dbReference>
<dbReference type="InterPro" id="IPR028198">
    <property type="entry name" value="SFTA2"/>
</dbReference>
<dbReference type="PANTHER" id="PTHR38500">
    <property type="entry name" value="SURFACTANT-ASSOCIATED PROTEIN 2"/>
    <property type="match status" value="1"/>
</dbReference>
<dbReference type="PANTHER" id="PTHR38500:SF1">
    <property type="entry name" value="SURFACTANT-ASSOCIATED PROTEIN 2"/>
    <property type="match status" value="1"/>
</dbReference>
<dbReference type="Pfam" id="PF15210">
    <property type="entry name" value="SFTA2"/>
    <property type="match status" value="1"/>
</dbReference>
<sequence length="77" mass="8502">MESLMRLFLLLALLSSSHAGPKVTLQVKLTETFQDKTSQNSSALDMLQKICLLLHLPSGTNVTLLHKGPPHYLTCRA</sequence>
<feature type="signal peptide" evidence="2">
    <location>
        <begin position="1"/>
        <end position="19"/>
    </location>
</feature>
<feature type="chain" id="PRO_5003245479" description="Surfactant-associated protein 2">
    <location>
        <begin position="20"/>
        <end position="77"/>
    </location>
</feature>
<feature type="glycosylation site" description="N-linked (GlcNAc...) asparagine" evidence="2">
    <location>
        <position position="61"/>
    </location>
</feature>
<protein>
    <recommendedName>
        <fullName evidence="5">Surfactant-associated protein 2</fullName>
    </recommendedName>
    <alternativeName>
        <fullName evidence="1">Surfactant-associated protein G</fullName>
    </alternativeName>
</protein>